<comment type="function">
    <text evidence="1">An essential GTPase that binds both GDP and GTP, with rapid nucleotide exchange. Plays a role in 16S rRNA processing and 30S ribosomal subunit biogenesis and possibly also in cell cycle regulation and energy metabolism.</text>
</comment>
<comment type="subunit">
    <text evidence="1">Monomer.</text>
</comment>
<comment type="subcellular location">
    <subcellularLocation>
        <location>Cytoplasm</location>
    </subcellularLocation>
    <subcellularLocation>
        <location evidence="1">Cell inner membrane</location>
        <topology evidence="1">Peripheral membrane protein</topology>
    </subcellularLocation>
</comment>
<comment type="similarity">
    <text evidence="1 2">Belongs to the TRAFAC class TrmE-Era-EngA-EngB-Septin-like GTPase superfamily. Era GTPase family.</text>
</comment>
<feature type="chain" id="PRO_1000121320" description="GTPase Era">
    <location>
        <begin position="1"/>
        <end position="301"/>
    </location>
</feature>
<feature type="domain" description="Era-type G" evidence="2">
    <location>
        <begin position="7"/>
        <end position="175"/>
    </location>
</feature>
<feature type="domain" description="KH type-2" evidence="1">
    <location>
        <begin position="206"/>
        <end position="283"/>
    </location>
</feature>
<feature type="region of interest" description="G1" evidence="2">
    <location>
        <begin position="15"/>
        <end position="22"/>
    </location>
</feature>
<feature type="region of interest" description="G2" evidence="2">
    <location>
        <begin position="41"/>
        <end position="45"/>
    </location>
</feature>
<feature type="region of interest" description="G3" evidence="2">
    <location>
        <begin position="62"/>
        <end position="65"/>
    </location>
</feature>
<feature type="region of interest" description="G4" evidence="2">
    <location>
        <begin position="124"/>
        <end position="127"/>
    </location>
</feature>
<feature type="region of interest" description="G5" evidence="2">
    <location>
        <begin position="154"/>
        <end position="156"/>
    </location>
</feature>
<feature type="binding site" evidence="1">
    <location>
        <begin position="15"/>
        <end position="22"/>
    </location>
    <ligand>
        <name>GTP</name>
        <dbReference type="ChEBI" id="CHEBI:37565"/>
    </ligand>
</feature>
<feature type="binding site" evidence="1">
    <location>
        <begin position="62"/>
        <end position="66"/>
    </location>
    <ligand>
        <name>GTP</name>
        <dbReference type="ChEBI" id="CHEBI:37565"/>
    </ligand>
</feature>
<feature type="binding site" evidence="1">
    <location>
        <begin position="124"/>
        <end position="127"/>
    </location>
    <ligand>
        <name>GTP</name>
        <dbReference type="ChEBI" id="CHEBI:37565"/>
    </ligand>
</feature>
<keyword id="KW-0997">Cell inner membrane</keyword>
<keyword id="KW-1003">Cell membrane</keyword>
<keyword id="KW-0963">Cytoplasm</keyword>
<keyword id="KW-0342">GTP-binding</keyword>
<keyword id="KW-0472">Membrane</keyword>
<keyword id="KW-0547">Nucleotide-binding</keyword>
<keyword id="KW-0690">Ribosome biogenesis</keyword>
<keyword id="KW-0694">RNA-binding</keyword>
<keyword id="KW-0699">rRNA-binding</keyword>
<reference key="1">
    <citation type="journal article" date="2009" name="PLoS Genet.">
        <title>Organised genome dynamics in the Escherichia coli species results in highly diverse adaptive paths.</title>
        <authorList>
            <person name="Touchon M."/>
            <person name="Hoede C."/>
            <person name="Tenaillon O."/>
            <person name="Barbe V."/>
            <person name="Baeriswyl S."/>
            <person name="Bidet P."/>
            <person name="Bingen E."/>
            <person name="Bonacorsi S."/>
            <person name="Bouchier C."/>
            <person name="Bouvet O."/>
            <person name="Calteau A."/>
            <person name="Chiapello H."/>
            <person name="Clermont O."/>
            <person name="Cruveiller S."/>
            <person name="Danchin A."/>
            <person name="Diard M."/>
            <person name="Dossat C."/>
            <person name="Karoui M.E."/>
            <person name="Frapy E."/>
            <person name="Garry L."/>
            <person name="Ghigo J.M."/>
            <person name="Gilles A.M."/>
            <person name="Johnson J."/>
            <person name="Le Bouguenec C."/>
            <person name="Lescat M."/>
            <person name="Mangenot S."/>
            <person name="Martinez-Jehanne V."/>
            <person name="Matic I."/>
            <person name="Nassif X."/>
            <person name="Oztas S."/>
            <person name="Petit M.A."/>
            <person name="Pichon C."/>
            <person name="Rouy Z."/>
            <person name="Ruf C.S."/>
            <person name="Schneider D."/>
            <person name="Tourret J."/>
            <person name="Vacherie B."/>
            <person name="Vallenet D."/>
            <person name="Medigue C."/>
            <person name="Rocha E.P.C."/>
            <person name="Denamur E."/>
        </authorList>
    </citation>
    <scope>NUCLEOTIDE SEQUENCE [LARGE SCALE GENOMIC DNA]</scope>
    <source>
        <strain>IAI39 / ExPEC</strain>
    </source>
</reference>
<organism>
    <name type="scientific">Escherichia coli O7:K1 (strain IAI39 / ExPEC)</name>
    <dbReference type="NCBI Taxonomy" id="585057"/>
    <lineage>
        <taxon>Bacteria</taxon>
        <taxon>Pseudomonadati</taxon>
        <taxon>Pseudomonadota</taxon>
        <taxon>Gammaproteobacteria</taxon>
        <taxon>Enterobacterales</taxon>
        <taxon>Enterobacteriaceae</taxon>
        <taxon>Escherichia</taxon>
    </lineage>
</organism>
<evidence type="ECO:0000255" key="1">
    <source>
        <dbReference type="HAMAP-Rule" id="MF_00367"/>
    </source>
</evidence>
<evidence type="ECO:0000255" key="2">
    <source>
        <dbReference type="PROSITE-ProRule" id="PRU01050"/>
    </source>
</evidence>
<protein>
    <recommendedName>
        <fullName evidence="1">GTPase Era</fullName>
    </recommendedName>
</protein>
<sequence length="301" mass="33796">MSIDKSYCGFIAIVGRPNVGKSTLLNKLLGQKISITSRKAQTTRHRIVGIHTEGAYQAIYVDTPGLHMEEKRAINRLMNKAASSSIGDVELVIFVVEGTRWTPDDEMVLNKLRDGKAPVILAVNKVDNVQEKADLLPHLQFLASQMNFLDIVPISAETGLNVDTIAAIVRKHLPEATHHFPEDYITDRSQRFMASEIIREKLMRFLGAELPYSVTVEIERFVSNERGGYDINGLILVEREGQKKMVIGNKGAKIKTIGIEARKDMQEMFEAPVHLELWVKVKSGWADDERALRSLGYVDDL</sequence>
<dbReference type="EMBL" id="CU928164">
    <property type="protein sequence ID" value="CAR18893.1"/>
    <property type="molecule type" value="Genomic_DNA"/>
</dbReference>
<dbReference type="RefSeq" id="WP_000020737.1">
    <property type="nucleotide sequence ID" value="NC_011750.1"/>
</dbReference>
<dbReference type="RefSeq" id="YP_002408709.1">
    <property type="nucleotide sequence ID" value="NC_011750.1"/>
</dbReference>
<dbReference type="SMR" id="B7NRL9"/>
<dbReference type="STRING" id="585057.ECIAI39_2771"/>
<dbReference type="GeneID" id="93774525"/>
<dbReference type="KEGG" id="ect:ECIAI39_2771"/>
<dbReference type="PATRIC" id="fig|585057.6.peg.2879"/>
<dbReference type="HOGENOM" id="CLU_038009_1_2_6"/>
<dbReference type="Proteomes" id="UP000000749">
    <property type="component" value="Chromosome"/>
</dbReference>
<dbReference type="GO" id="GO:0005829">
    <property type="term" value="C:cytosol"/>
    <property type="evidence" value="ECO:0007669"/>
    <property type="project" value="TreeGrafter"/>
</dbReference>
<dbReference type="GO" id="GO:0005886">
    <property type="term" value="C:plasma membrane"/>
    <property type="evidence" value="ECO:0007669"/>
    <property type="project" value="UniProtKB-SubCell"/>
</dbReference>
<dbReference type="GO" id="GO:0005525">
    <property type="term" value="F:GTP binding"/>
    <property type="evidence" value="ECO:0007669"/>
    <property type="project" value="UniProtKB-UniRule"/>
</dbReference>
<dbReference type="GO" id="GO:0003924">
    <property type="term" value="F:GTPase activity"/>
    <property type="evidence" value="ECO:0007669"/>
    <property type="project" value="UniProtKB-UniRule"/>
</dbReference>
<dbReference type="GO" id="GO:0043024">
    <property type="term" value="F:ribosomal small subunit binding"/>
    <property type="evidence" value="ECO:0007669"/>
    <property type="project" value="TreeGrafter"/>
</dbReference>
<dbReference type="GO" id="GO:0070181">
    <property type="term" value="F:small ribosomal subunit rRNA binding"/>
    <property type="evidence" value="ECO:0007669"/>
    <property type="project" value="UniProtKB-UniRule"/>
</dbReference>
<dbReference type="GO" id="GO:0000028">
    <property type="term" value="P:ribosomal small subunit assembly"/>
    <property type="evidence" value="ECO:0007669"/>
    <property type="project" value="TreeGrafter"/>
</dbReference>
<dbReference type="CDD" id="cd04163">
    <property type="entry name" value="Era"/>
    <property type="match status" value="1"/>
</dbReference>
<dbReference type="CDD" id="cd22534">
    <property type="entry name" value="KH-II_Era"/>
    <property type="match status" value="1"/>
</dbReference>
<dbReference type="FunFam" id="3.30.300.20:FF:000003">
    <property type="entry name" value="GTPase Era"/>
    <property type="match status" value="1"/>
</dbReference>
<dbReference type="FunFam" id="3.40.50.300:FF:000094">
    <property type="entry name" value="GTPase Era"/>
    <property type="match status" value="1"/>
</dbReference>
<dbReference type="Gene3D" id="3.30.300.20">
    <property type="match status" value="1"/>
</dbReference>
<dbReference type="Gene3D" id="3.40.50.300">
    <property type="entry name" value="P-loop containing nucleotide triphosphate hydrolases"/>
    <property type="match status" value="1"/>
</dbReference>
<dbReference type="HAMAP" id="MF_00367">
    <property type="entry name" value="GTPase_Era"/>
    <property type="match status" value="1"/>
</dbReference>
<dbReference type="InterPro" id="IPR030388">
    <property type="entry name" value="G_ERA_dom"/>
</dbReference>
<dbReference type="InterPro" id="IPR006073">
    <property type="entry name" value="GTP-bd"/>
</dbReference>
<dbReference type="InterPro" id="IPR005662">
    <property type="entry name" value="GTPase_Era-like"/>
</dbReference>
<dbReference type="InterPro" id="IPR015946">
    <property type="entry name" value="KH_dom-like_a/b"/>
</dbReference>
<dbReference type="InterPro" id="IPR004044">
    <property type="entry name" value="KH_dom_type_2"/>
</dbReference>
<dbReference type="InterPro" id="IPR009019">
    <property type="entry name" value="KH_sf_prok-type"/>
</dbReference>
<dbReference type="InterPro" id="IPR027417">
    <property type="entry name" value="P-loop_NTPase"/>
</dbReference>
<dbReference type="InterPro" id="IPR005225">
    <property type="entry name" value="Small_GTP-bd"/>
</dbReference>
<dbReference type="NCBIfam" id="TIGR00436">
    <property type="entry name" value="era"/>
    <property type="match status" value="1"/>
</dbReference>
<dbReference type="NCBIfam" id="NF000908">
    <property type="entry name" value="PRK00089.1"/>
    <property type="match status" value="1"/>
</dbReference>
<dbReference type="NCBIfam" id="TIGR00231">
    <property type="entry name" value="small_GTP"/>
    <property type="match status" value="1"/>
</dbReference>
<dbReference type="PANTHER" id="PTHR42698">
    <property type="entry name" value="GTPASE ERA"/>
    <property type="match status" value="1"/>
</dbReference>
<dbReference type="PANTHER" id="PTHR42698:SF1">
    <property type="entry name" value="GTPASE ERA, MITOCHONDRIAL"/>
    <property type="match status" value="1"/>
</dbReference>
<dbReference type="Pfam" id="PF07650">
    <property type="entry name" value="KH_2"/>
    <property type="match status" value="1"/>
</dbReference>
<dbReference type="Pfam" id="PF01926">
    <property type="entry name" value="MMR_HSR1"/>
    <property type="match status" value="1"/>
</dbReference>
<dbReference type="SUPFAM" id="SSF52540">
    <property type="entry name" value="P-loop containing nucleoside triphosphate hydrolases"/>
    <property type="match status" value="1"/>
</dbReference>
<dbReference type="SUPFAM" id="SSF54814">
    <property type="entry name" value="Prokaryotic type KH domain (KH-domain type II)"/>
    <property type="match status" value="1"/>
</dbReference>
<dbReference type="PROSITE" id="PS51713">
    <property type="entry name" value="G_ERA"/>
    <property type="match status" value="1"/>
</dbReference>
<dbReference type="PROSITE" id="PS50823">
    <property type="entry name" value="KH_TYPE_2"/>
    <property type="match status" value="1"/>
</dbReference>
<accession>B7NRL9</accession>
<name>ERA_ECO7I</name>
<gene>
    <name evidence="1" type="primary">era</name>
    <name type="ordered locus">ECIAI39_2771</name>
</gene>
<proteinExistence type="inferred from homology"/>